<keyword id="KW-0029">Amino-acid transport</keyword>
<keyword id="KW-0997">Cell inner membrane</keyword>
<keyword id="KW-1003">Cell membrane</keyword>
<keyword id="KW-0472">Membrane</keyword>
<keyword id="KW-1185">Reference proteome</keyword>
<keyword id="KW-0769">Symport</keyword>
<keyword id="KW-0812">Transmembrane</keyword>
<keyword id="KW-1133">Transmembrane helix</keyword>
<keyword id="KW-0813">Transport</keyword>
<proteinExistence type="inferred from homology"/>
<gene>
    <name evidence="1" type="primary">tdcC</name>
    <name type="ordered locus">ECS88_3509</name>
</gene>
<evidence type="ECO:0000255" key="1">
    <source>
        <dbReference type="HAMAP-Rule" id="MF_01583"/>
    </source>
</evidence>
<feature type="chain" id="PRO_1000147625" description="Threonine/serine transporter TdcC">
    <location>
        <begin position="1"/>
        <end position="443"/>
    </location>
</feature>
<feature type="transmembrane region" description="Helical" evidence="1">
    <location>
        <begin position="22"/>
        <end position="42"/>
    </location>
</feature>
<feature type="transmembrane region" description="Helical" evidence="1">
    <location>
        <begin position="44"/>
        <end position="64"/>
    </location>
</feature>
<feature type="transmembrane region" description="Helical" evidence="1">
    <location>
        <begin position="97"/>
        <end position="117"/>
    </location>
</feature>
<feature type="transmembrane region" description="Helical" evidence="1">
    <location>
        <begin position="140"/>
        <end position="160"/>
    </location>
</feature>
<feature type="transmembrane region" description="Helical" evidence="1">
    <location>
        <begin position="163"/>
        <end position="183"/>
    </location>
</feature>
<feature type="transmembrane region" description="Helical" evidence="1">
    <location>
        <begin position="207"/>
        <end position="227"/>
    </location>
</feature>
<feature type="transmembrane region" description="Helical" evidence="1">
    <location>
        <begin position="261"/>
        <end position="281"/>
    </location>
</feature>
<feature type="transmembrane region" description="Helical" evidence="1">
    <location>
        <begin position="312"/>
        <end position="332"/>
    </location>
</feature>
<feature type="transmembrane region" description="Helical" evidence="1">
    <location>
        <begin position="366"/>
        <end position="386"/>
    </location>
</feature>
<feature type="transmembrane region" description="Helical" evidence="1">
    <location>
        <begin position="389"/>
        <end position="409"/>
    </location>
</feature>
<feature type="transmembrane region" description="Helical" evidence="1">
    <location>
        <begin position="423"/>
        <end position="443"/>
    </location>
</feature>
<protein>
    <recommendedName>
        <fullName evidence="1">Threonine/serine transporter TdcC</fullName>
    </recommendedName>
    <alternativeName>
        <fullName evidence="1">H(+)/threonine-serine symporter</fullName>
    </alternativeName>
</protein>
<name>TDCC_ECO45</name>
<organism>
    <name type="scientific">Escherichia coli O45:K1 (strain S88 / ExPEC)</name>
    <dbReference type="NCBI Taxonomy" id="585035"/>
    <lineage>
        <taxon>Bacteria</taxon>
        <taxon>Pseudomonadati</taxon>
        <taxon>Pseudomonadota</taxon>
        <taxon>Gammaproteobacteria</taxon>
        <taxon>Enterobacterales</taxon>
        <taxon>Enterobacteriaceae</taxon>
        <taxon>Escherichia</taxon>
    </lineage>
</organism>
<comment type="function">
    <text evidence="1">Involved in the import of threonine and serine into the cell, with the concomitant import of a proton (symport system).</text>
</comment>
<comment type="catalytic activity">
    <reaction evidence="1">
        <text>L-threonine(in) + H(+)(in) = L-threonine(out) + H(+)(out)</text>
        <dbReference type="Rhea" id="RHEA:28883"/>
        <dbReference type="ChEBI" id="CHEBI:15378"/>
        <dbReference type="ChEBI" id="CHEBI:57926"/>
    </reaction>
    <physiologicalReaction direction="right-to-left" evidence="1">
        <dbReference type="Rhea" id="RHEA:28885"/>
    </physiologicalReaction>
</comment>
<comment type="catalytic activity">
    <reaction evidence="1">
        <text>L-serine(in) + H(+)(in) = L-serine(out) + H(+)(out)</text>
        <dbReference type="Rhea" id="RHEA:28887"/>
        <dbReference type="ChEBI" id="CHEBI:15378"/>
        <dbReference type="ChEBI" id="CHEBI:33384"/>
    </reaction>
    <physiologicalReaction direction="right-to-left" evidence="1">
        <dbReference type="Rhea" id="RHEA:28889"/>
    </physiologicalReaction>
</comment>
<comment type="subcellular location">
    <subcellularLocation>
        <location evidence="1">Cell inner membrane</location>
        <topology evidence="1">Multi-pass membrane protein</topology>
    </subcellularLocation>
</comment>
<comment type="similarity">
    <text evidence="1">Belongs to the amino acid/polyamine transporter 2 family. SdaC/TdcC subfamily.</text>
</comment>
<sequence length="443" mass="48859">MSTSDSIVSSQTKQSSWRKSDTTWTLGLFGTAIGAGVLFFPIRAGFGGLIPILLMLVLAYPIAFYCHRALARLCLSGSNPSGNITETVEEHFGKTGGVVITFLYFFAICPLLWIYGVTITNTFMTFWENQLGFAPLNRGFVALFLLLLMAFVIWFGKDLMVKVMSYLVWPFIASLVLISLSLIPYWNSAVIDQVDLGSLSLTGHDGILITVWLGISIMVFSFNFSPIVSSFVVSKREEYEKDFGRDFTERKCSQIISRASMLMVAVVMFFAFSCLFTLSPANMAEAKAQNIPVLSYLANHFASMTGTKTTLAITLEYAASIIALVAIFKSFFGHYLGTLEGLNGLILKFGYKGDKTKVSLGKLNTISMIFIMGSTWVVAYANPNILDLIEAMGAPIIASLLCLLPMYAIRKAPSLAKYRGRLDNVFVTVIGLLTILNIVYKLF</sequence>
<reference key="1">
    <citation type="journal article" date="2009" name="PLoS Genet.">
        <title>Organised genome dynamics in the Escherichia coli species results in highly diverse adaptive paths.</title>
        <authorList>
            <person name="Touchon M."/>
            <person name="Hoede C."/>
            <person name="Tenaillon O."/>
            <person name="Barbe V."/>
            <person name="Baeriswyl S."/>
            <person name="Bidet P."/>
            <person name="Bingen E."/>
            <person name="Bonacorsi S."/>
            <person name="Bouchier C."/>
            <person name="Bouvet O."/>
            <person name="Calteau A."/>
            <person name="Chiapello H."/>
            <person name="Clermont O."/>
            <person name="Cruveiller S."/>
            <person name="Danchin A."/>
            <person name="Diard M."/>
            <person name="Dossat C."/>
            <person name="Karoui M.E."/>
            <person name="Frapy E."/>
            <person name="Garry L."/>
            <person name="Ghigo J.M."/>
            <person name="Gilles A.M."/>
            <person name="Johnson J."/>
            <person name="Le Bouguenec C."/>
            <person name="Lescat M."/>
            <person name="Mangenot S."/>
            <person name="Martinez-Jehanne V."/>
            <person name="Matic I."/>
            <person name="Nassif X."/>
            <person name="Oztas S."/>
            <person name="Petit M.A."/>
            <person name="Pichon C."/>
            <person name="Rouy Z."/>
            <person name="Ruf C.S."/>
            <person name="Schneider D."/>
            <person name="Tourret J."/>
            <person name="Vacherie B."/>
            <person name="Vallenet D."/>
            <person name="Medigue C."/>
            <person name="Rocha E.P.C."/>
            <person name="Denamur E."/>
        </authorList>
    </citation>
    <scope>NUCLEOTIDE SEQUENCE [LARGE SCALE GENOMIC DNA]</scope>
    <source>
        <strain>S88 / ExPEC</strain>
    </source>
</reference>
<dbReference type="EMBL" id="CU928161">
    <property type="protein sequence ID" value="CAR04737.1"/>
    <property type="molecule type" value="Genomic_DNA"/>
</dbReference>
<dbReference type="RefSeq" id="WP_000107724.1">
    <property type="nucleotide sequence ID" value="NC_011742.1"/>
</dbReference>
<dbReference type="SMR" id="B7MB46"/>
<dbReference type="KEGG" id="ecz:ECS88_3509"/>
<dbReference type="HOGENOM" id="CLU_052043_1_1_6"/>
<dbReference type="Proteomes" id="UP000000747">
    <property type="component" value="Chromosome"/>
</dbReference>
<dbReference type="GO" id="GO:0005886">
    <property type="term" value="C:plasma membrane"/>
    <property type="evidence" value="ECO:0007669"/>
    <property type="project" value="UniProtKB-SubCell"/>
</dbReference>
<dbReference type="GO" id="GO:0015194">
    <property type="term" value="F:L-serine transmembrane transporter activity"/>
    <property type="evidence" value="ECO:0007669"/>
    <property type="project" value="InterPro"/>
</dbReference>
<dbReference type="GO" id="GO:0015293">
    <property type="term" value="F:symporter activity"/>
    <property type="evidence" value="ECO:0007669"/>
    <property type="project" value="UniProtKB-UniRule"/>
</dbReference>
<dbReference type="GO" id="GO:0015565">
    <property type="term" value="F:threonine efflux transmembrane transporter activity"/>
    <property type="evidence" value="ECO:0007669"/>
    <property type="project" value="InterPro"/>
</dbReference>
<dbReference type="Gene3D" id="1.20.1740.10">
    <property type="entry name" value="Amino acid/polyamine transporter I"/>
    <property type="match status" value="1"/>
</dbReference>
<dbReference type="HAMAP" id="MF_01583">
    <property type="entry name" value="Thr_Ser_transp_TdcC"/>
    <property type="match status" value="1"/>
</dbReference>
<dbReference type="InterPro" id="IPR018227">
    <property type="entry name" value="Amino_acid_transport_2"/>
</dbReference>
<dbReference type="InterPro" id="IPR004694">
    <property type="entry name" value="Hydroxy_aa_transpt"/>
</dbReference>
<dbReference type="InterPro" id="IPR023726">
    <property type="entry name" value="Thr/Ser_transpt_TdcC"/>
</dbReference>
<dbReference type="NCBIfam" id="NF010152">
    <property type="entry name" value="PRK13629.1"/>
    <property type="match status" value="1"/>
</dbReference>
<dbReference type="NCBIfam" id="TIGR00814">
    <property type="entry name" value="stp"/>
    <property type="match status" value="1"/>
</dbReference>
<dbReference type="PANTHER" id="PTHR35334">
    <property type="entry name" value="SERINE TRANSPORTER"/>
    <property type="match status" value="1"/>
</dbReference>
<dbReference type="PANTHER" id="PTHR35334:SF1">
    <property type="entry name" value="THREONINE_SERINE TRANSPORTER TDCC"/>
    <property type="match status" value="1"/>
</dbReference>
<dbReference type="Pfam" id="PF03222">
    <property type="entry name" value="Trp_Tyr_perm"/>
    <property type="match status" value="1"/>
</dbReference>
<accession>B7MB46</accession>